<comment type="function">
    <text evidence="1">This protein is involved in the repair of mismatches in DNA. It is required for dam-dependent methyl-directed DNA mismatch repair. May act as a 'molecular matchmaker', a protein that promotes the formation of a stable complex between two or more DNA-binding proteins in an ATP-dependent manner without itself being part of a final effector complex (By similarity).</text>
</comment>
<comment type="similarity">
    <text evidence="2">Belongs to the DNA mismatch repair MutL/HexB family.</text>
</comment>
<reference key="1">
    <citation type="journal article" date="2001" name="Proc. Natl. Acad. Sci. U.S.A.">
        <title>Complete genome sequence of Caulobacter crescentus.</title>
        <authorList>
            <person name="Nierman W.C."/>
            <person name="Feldblyum T.V."/>
            <person name="Laub M.T."/>
            <person name="Paulsen I.T."/>
            <person name="Nelson K.E."/>
            <person name="Eisen J.A."/>
            <person name="Heidelberg J.F."/>
            <person name="Alley M.R.K."/>
            <person name="Ohta N."/>
            <person name="Maddock J.R."/>
            <person name="Potocka I."/>
            <person name="Nelson W.C."/>
            <person name="Newton A."/>
            <person name="Stephens C."/>
            <person name="Phadke N.D."/>
            <person name="Ely B."/>
            <person name="DeBoy R.T."/>
            <person name="Dodson R.J."/>
            <person name="Durkin A.S."/>
            <person name="Gwinn M.L."/>
            <person name="Haft D.H."/>
            <person name="Kolonay J.F."/>
            <person name="Smit J."/>
            <person name="Craven M.B."/>
            <person name="Khouri H.M."/>
            <person name="Shetty J."/>
            <person name="Berry K.J."/>
            <person name="Utterback T.R."/>
            <person name="Tran K."/>
            <person name="Wolf A.M."/>
            <person name="Vamathevan J.J."/>
            <person name="Ermolaeva M.D."/>
            <person name="White O."/>
            <person name="Salzberg S.L."/>
            <person name="Venter J.C."/>
            <person name="Shapiro L."/>
            <person name="Fraser C.M."/>
        </authorList>
    </citation>
    <scope>NUCLEOTIDE SEQUENCE [LARGE SCALE GENOMIC DNA]</scope>
    <source>
        <strain>ATCC 19089 / CIP 103742 / CB 15</strain>
    </source>
</reference>
<keyword id="KW-0227">DNA damage</keyword>
<keyword id="KW-0234">DNA repair</keyword>
<keyword id="KW-1185">Reference proteome</keyword>
<accession>P0CAV5</accession>
<accession>Q9RP66</accession>
<evidence type="ECO:0000250" key="1"/>
<evidence type="ECO:0000305" key="2"/>
<gene>
    <name type="primary">mutL</name>
    <name type="ordered locus">CC_0695</name>
</gene>
<proteinExistence type="inferred from homology"/>
<feature type="chain" id="PRO_0000177934" description="DNA mismatch repair protein MutL">
    <location>
        <begin position="1"/>
        <end position="637"/>
    </location>
</feature>
<organism>
    <name type="scientific">Caulobacter vibrioides (strain ATCC 19089 / CIP 103742 / CB 15)</name>
    <name type="common">Caulobacter crescentus</name>
    <dbReference type="NCBI Taxonomy" id="190650"/>
    <lineage>
        <taxon>Bacteria</taxon>
        <taxon>Pseudomonadati</taxon>
        <taxon>Pseudomonadota</taxon>
        <taxon>Alphaproteobacteria</taxon>
        <taxon>Caulobacterales</taxon>
        <taxon>Caulobacteraceae</taxon>
        <taxon>Caulobacter</taxon>
    </lineage>
</organism>
<protein>
    <recommendedName>
        <fullName>DNA mismatch repair protein MutL</fullName>
    </recommendedName>
</protein>
<sequence>MPIRRLPPETVNRIAAGEVVERPASAIKELVDNAIDAGATRIEVEAHGGGLTRILVADDGCGLSPEELPVAIERHATSKLAPDADGLWDLLRIHTMGFRGEALPSIGSVARLQISSRAKGAKDAFSILVEGGQVGEVAPAAFPGPHGARIEVRDLFYATPARLKFMKSERAEALAITEEIKRQAMANESVGFSLDIDGRRVLRLPPEHPGPQGRLARLAAVLGREFQENALEIDQTRDGVRLSGFAGLPTYNRGNAAHQYLFVNGRPVRDRLLQGALRAAYADFLARDRHPTAALYVTLETTEVDVNVHPAKAEVRFRDPALVRGLIVGALRHALAGAGHRASTTVAAQALDSIRAQQSPFPGYQPQYQPGPSPAGFSAWREGGWTPPTQRPMDLPGLNEVSARVEPSYGGDLAGVVREAYAAAAFEDRPPTDYPGATAPFDPVDYPLGAARAQVHETYIVAQTRDGMVIVDQHAAHERLVYERMKGEMASGGVTRQTLLLPEVVDLDPAEAERVVARAEELAGLGLVLESFGPGAVLVRETPALLGKTDAAALVRDIADDLAENGQALALKERLEEVCSTMACHGSVRAGRRLNGAEMNALLREMEATPHSGQCNHGRPTYVELKLADIEKLFGRR</sequence>
<dbReference type="EMBL" id="AE005673">
    <property type="protein sequence ID" value="AAK22680.1"/>
    <property type="molecule type" value="Genomic_DNA"/>
</dbReference>
<dbReference type="PIR" id="D87335">
    <property type="entry name" value="D87335"/>
</dbReference>
<dbReference type="RefSeq" id="NP_419512.1">
    <property type="nucleotide sequence ID" value="NC_002696.2"/>
</dbReference>
<dbReference type="RefSeq" id="WP_010918581.1">
    <property type="nucleotide sequence ID" value="NC_002696.2"/>
</dbReference>
<dbReference type="SMR" id="P0CAV5"/>
<dbReference type="STRING" id="190650.CC_0695"/>
<dbReference type="EnsemblBacteria" id="AAK22680">
    <property type="protein sequence ID" value="AAK22680"/>
    <property type="gene ID" value="CC_0695"/>
</dbReference>
<dbReference type="KEGG" id="ccr:CC_0695"/>
<dbReference type="PATRIC" id="fig|190650.5.peg.704"/>
<dbReference type="eggNOG" id="COG0323">
    <property type="taxonomic scope" value="Bacteria"/>
</dbReference>
<dbReference type="HOGENOM" id="CLU_004131_4_2_5"/>
<dbReference type="BioCyc" id="CAULO:CC0695-MONOMER"/>
<dbReference type="Proteomes" id="UP000001816">
    <property type="component" value="Chromosome"/>
</dbReference>
<dbReference type="GO" id="GO:0032300">
    <property type="term" value="C:mismatch repair complex"/>
    <property type="evidence" value="ECO:0007669"/>
    <property type="project" value="InterPro"/>
</dbReference>
<dbReference type="GO" id="GO:0005524">
    <property type="term" value="F:ATP binding"/>
    <property type="evidence" value="ECO:0007669"/>
    <property type="project" value="InterPro"/>
</dbReference>
<dbReference type="GO" id="GO:0016887">
    <property type="term" value="F:ATP hydrolysis activity"/>
    <property type="evidence" value="ECO:0007669"/>
    <property type="project" value="InterPro"/>
</dbReference>
<dbReference type="GO" id="GO:0140664">
    <property type="term" value="F:ATP-dependent DNA damage sensor activity"/>
    <property type="evidence" value="ECO:0007669"/>
    <property type="project" value="InterPro"/>
</dbReference>
<dbReference type="GO" id="GO:0030983">
    <property type="term" value="F:mismatched DNA binding"/>
    <property type="evidence" value="ECO:0007669"/>
    <property type="project" value="InterPro"/>
</dbReference>
<dbReference type="GO" id="GO:0006298">
    <property type="term" value="P:mismatch repair"/>
    <property type="evidence" value="ECO:0007669"/>
    <property type="project" value="UniProtKB-UniRule"/>
</dbReference>
<dbReference type="CDD" id="cd16926">
    <property type="entry name" value="HATPase_MutL-MLH-PMS-like"/>
    <property type="match status" value="1"/>
</dbReference>
<dbReference type="CDD" id="cd03482">
    <property type="entry name" value="MutL_Trans_MutL"/>
    <property type="match status" value="1"/>
</dbReference>
<dbReference type="FunFam" id="3.30.565.10:FF:000003">
    <property type="entry name" value="DNA mismatch repair endonuclease MutL"/>
    <property type="match status" value="1"/>
</dbReference>
<dbReference type="Gene3D" id="3.30.230.10">
    <property type="match status" value="1"/>
</dbReference>
<dbReference type="Gene3D" id="3.30.565.10">
    <property type="entry name" value="Histidine kinase-like ATPase, C-terminal domain"/>
    <property type="match status" value="1"/>
</dbReference>
<dbReference type="Gene3D" id="3.30.1540.20">
    <property type="entry name" value="MutL, C-terminal domain, dimerisation subdomain"/>
    <property type="match status" value="1"/>
</dbReference>
<dbReference type="Gene3D" id="3.30.1370.100">
    <property type="entry name" value="MutL, C-terminal domain, regulatory subdomain"/>
    <property type="match status" value="1"/>
</dbReference>
<dbReference type="HAMAP" id="MF_00149">
    <property type="entry name" value="DNA_mis_repair"/>
    <property type="match status" value="1"/>
</dbReference>
<dbReference type="InterPro" id="IPR014762">
    <property type="entry name" value="DNA_mismatch_repair_CS"/>
</dbReference>
<dbReference type="InterPro" id="IPR020667">
    <property type="entry name" value="DNA_mismatch_repair_MutL"/>
</dbReference>
<dbReference type="InterPro" id="IPR013507">
    <property type="entry name" value="DNA_mismatch_S5_2-like"/>
</dbReference>
<dbReference type="InterPro" id="IPR036890">
    <property type="entry name" value="HATPase_C_sf"/>
</dbReference>
<dbReference type="InterPro" id="IPR002099">
    <property type="entry name" value="MutL/Mlh/PMS"/>
</dbReference>
<dbReference type="InterPro" id="IPR038973">
    <property type="entry name" value="MutL/Mlh/Pms-like"/>
</dbReference>
<dbReference type="InterPro" id="IPR014790">
    <property type="entry name" value="MutL_C"/>
</dbReference>
<dbReference type="InterPro" id="IPR042120">
    <property type="entry name" value="MutL_C_dimsub"/>
</dbReference>
<dbReference type="InterPro" id="IPR042121">
    <property type="entry name" value="MutL_C_regsub"/>
</dbReference>
<dbReference type="InterPro" id="IPR037198">
    <property type="entry name" value="MutL_C_sf"/>
</dbReference>
<dbReference type="InterPro" id="IPR020568">
    <property type="entry name" value="Ribosomal_Su5_D2-typ_SF"/>
</dbReference>
<dbReference type="InterPro" id="IPR014721">
    <property type="entry name" value="Ribsml_uS5_D2-typ_fold_subgr"/>
</dbReference>
<dbReference type="NCBIfam" id="TIGR00585">
    <property type="entry name" value="mutl"/>
    <property type="match status" value="1"/>
</dbReference>
<dbReference type="NCBIfam" id="NF000953">
    <property type="entry name" value="PRK00095.2-4"/>
    <property type="match status" value="1"/>
</dbReference>
<dbReference type="PANTHER" id="PTHR10073">
    <property type="entry name" value="DNA MISMATCH REPAIR PROTEIN MLH, PMS, MUTL"/>
    <property type="match status" value="1"/>
</dbReference>
<dbReference type="PANTHER" id="PTHR10073:SF12">
    <property type="entry name" value="DNA MISMATCH REPAIR PROTEIN MLH1"/>
    <property type="match status" value="1"/>
</dbReference>
<dbReference type="Pfam" id="PF01119">
    <property type="entry name" value="DNA_mis_repair"/>
    <property type="match status" value="1"/>
</dbReference>
<dbReference type="Pfam" id="PF13589">
    <property type="entry name" value="HATPase_c_3"/>
    <property type="match status" value="1"/>
</dbReference>
<dbReference type="Pfam" id="PF08676">
    <property type="entry name" value="MutL_C"/>
    <property type="match status" value="1"/>
</dbReference>
<dbReference type="SMART" id="SM01340">
    <property type="entry name" value="DNA_mis_repair"/>
    <property type="match status" value="1"/>
</dbReference>
<dbReference type="SMART" id="SM00853">
    <property type="entry name" value="MutL_C"/>
    <property type="match status" value="1"/>
</dbReference>
<dbReference type="SUPFAM" id="SSF55874">
    <property type="entry name" value="ATPase domain of HSP90 chaperone/DNA topoisomerase II/histidine kinase"/>
    <property type="match status" value="1"/>
</dbReference>
<dbReference type="SUPFAM" id="SSF118116">
    <property type="entry name" value="DNA mismatch repair protein MutL"/>
    <property type="match status" value="1"/>
</dbReference>
<dbReference type="SUPFAM" id="SSF54211">
    <property type="entry name" value="Ribosomal protein S5 domain 2-like"/>
    <property type="match status" value="1"/>
</dbReference>
<dbReference type="PROSITE" id="PS00058">
    <property type="entry name" value="DNA_MISMATCH_REPAIR_1"/>
    <property type="match status" value="1"/>
</dbReference>
<name>MUTL_CAUVC</name>